<comment type="function">
    <text evidence="1">This protein binds specifically to 23S rRNA; its binding is stimulated by other ribosomal proteins, e.g. L4, L17, and L20. It is important during the early stages of 50S assembly. It makes multiple contacts with different domains of the 23S rRNA in the assembled 50S subunit and ribosome (By similarity).</text>
</comment>
<comment type="function">
    <text evidence="1">The globular domain of the protein is located near the polypeptide exit tunnel on the outside of the subunit, while an extended beta-hairpin is found that lines the wall of the exit tunnel in the center of the 70S ribosome.</text>
</comment>
<comment type="subunit">
    <text evidence="1">Part of the 50S ribosomal subunit.</text>
</comment>
<comment type="similarity">
    <text evidence="1">Belongs to the universal ribosomal protein uL22 family.</text>
</comment>
<evidence type="ECO:0000255" key="1">
    <source>
        <dbReference type="HAMAP-Rule" id="MF_01331"/>
    </source>
</evidence>
<evidence type="ECO:0000305" key="2"/>
<reference key="1">
    <citation type="journal article" date="2014" name="Stand. Genomic Sci.">
        <title>Complete genome sequence of Burkholderia phymatum STM815(T), a broad host range and efficient nitrogen-fixing symbiont of Mimosa species.</title>
        <authorList>
            <person name="Moulin L."/>
            <person name="Klonowska A."/>
            <person name="Caroline B."/>
            <person name="Booth K."/>
            <person name="Vriezen J.A."/>
            <person name="Melkonian R."/>
            <person name="James E.K."/>
            <person name="Young J.P."/>
            <person name="Bena G."/>
            <person name="Hauser L."/>
            <person name="Land M."/>
            <person name="Kyrpides N."/>
            <person name="Bruce D."/>
            <person name="Chain P."/>
            <person name="Copeland A."/>
            <person name="Pitluck S."/>
            <person name="Woyke T."/>
            <person name="Lizotte-Waniewski M."/>
            <person name="Bristow J."/>
            <person name="Riley M."/>
        </authorList>
    </citation>
    <scope>NUCLEOTIDE SEQUENCE [LARGE SCALE GENOMIC DNA]</scope>
    <source>
        <strain>DSM 17167 / CIP 108236 / LMG 21445 / STM815</strain>
    </source>
</reference>
<keyword id="KW-1185">Reference proteome</keyword>
<keyword id="KW-0687">Ribonucleoprotein</keyword>
<keyword id="KW-0689">Ribosomal protein</keyword>
<keyword id="KW-0694">RNA-binding</keyword>
<keyword id="KW-0699">rRNA-binding</keyword>
<feature type="chain" id="PRO_1000142242" description="Large ribosomal subunit protein uL22">
    <location>
        <begin position="1"/>
        <end position="109"/>
    </location>
</feature>
<organism>
    <name type="scientific">Paraburkholderia phymatum (strain DSM 17167 / CIP 108236 / LMG 21445 / STM815)</name>
    <name type="common">Burkholderia phymatum</name>
    <dbReference type="NCBI Taxonomy" id="391038"/>
    <lineage>
        <taxon>Bacteria</taxon>
        <taxon>Pseudomonadati</taxon>
        <taxon>Pseudomonadota</taxon>
        <taxon>Betaproteobacteria</taxon>
        <taxon>Burkholderiales</taxon>
        <taxon>Burkholderiaceae</taxon>
        <taxon>Paraburkholderia</taxon>
    </lineage>
</organism>
<name>RL22_PARP8</name>
<proteinExistence type="inferred from homology"/>
<protein>
    <recommendedName>
        <fullName evidence="1">Large ribosomal subunit protein uL22</fullName>
    </recommendedName>
    <alternativeName>
        <fullName evidence="2">50S ribosomal protein L22</fullName>
    </alternativeName>
</protein>
<gene>
    <name evidence="1" type="primary">rplV</name>
    <name type="ordered locus">Bphy_2835</name>
</gene>
<accession>B2JI61</accession>
<sequence length="109" mass="11816">MEVKAIHRGARISAQKTRLVADQIRGLPVDKALNVLTFSPKKAAGIVKKVVLSAIANAEHNEGADIDELKIKSIYVDKAASLKRFTARAKGRGNRIEKQSCHITVTVGN</sequence>
<dbReference type="EMBL" id="CP001043">
    <property type="protein sequence ID" value="ACC72007.1"/>
    <property type="molecule type" value="Genomic_DNA"/>
</dbReference>
<dbReference type="RefSeq" id="WP_004199272.1">
    <property type="nucleotide sequence ID" value="NZ_CADFGH010000028.1"/>
</dbReference>
<dbReference type="SMR" id="B2JI61"/>
<dbReference type="STRING" id="391038.Bphy_2835"/>
<dbReference type="GeneID" id="98107155"/>
<dbReference type="KEGG" id="bph:Bphy_2835"/>
<dbReference type="eggNOG" id="COG0091">
    <property type="taxonomic scope" value="Bacteria"/>
</dbReference>
<dbReference type="HOGENOM" id="CLU_083987_3_3_4"/>
<dbReference type="OrthoDB" id="9805969at2"/>
<dbReference type="Proteomes" id="UP000001192">
    <property type="component" value="Chromosome 1"/>
</dbReference>
<dbReference type="GO" id="GO:0022625">
    <property type="term" value="C:cytosolic large ribosomal subunit"/>
    <property type="evidence" value="ECO:0007669"/>
    <property type="project" value="TreeGrafter"/>
</dbReference>
<dbReference type="GO" id="GO:0019843">
    <property type="term" value="F:rRNA binding"/>
    <property type="evidence" value="ECO:0007669"/>
    <property type="project" value="UniProtKB-UniRule"/>
</dbReference>
<dbReference type="GO" id="GO:0003735">
    <property type="term" value="F:structural constituent of ribosome"/>
    <property type="evidence" value="ECO:0007669"/>
    <property type="project" value="InterPro"/>
</dbReference>
<dbReference type="GO" id="GO:0006412">
    <property type="term" value="P:translation"/>
    <property type="evidence" value="ECO:0007669"/>
    <property type="project" value="UniProtKB-UniRule"/>
</dbReference>
<dbReference type="CDD" id="cd00336">
    <property type="entry name" value="Ribosomal_L22"/>
    <property type="match status" value="1"/>
</dbReference>
<dbReference type="FunFam" id="3.90.470.10:FF:000001">
    <property type="entry name" value="50S ribosomal protein L22"/>
    <property type="match status" value="1"/>
</dbReference>
<dbReference type="Gene3D" id="3.90.470.10">
    <property type="entry name" value="Ribosomal protein L22/L17"/>
    <property type="match status" value="1"/>
</dbReference>
<dbReference type="HAMAP" id="MF_01331_B">
    <property type="entry name" value="Ribosomal_uL22_B"/>
    <property type="match status" value="1"/>
</dbReference>
<dbReference type="InterPro" id="IPR001063">
    <property type="entry name" value="Ribosomal_uL22"/>
</dbReference>
<dbReference type="InterPro" id="IPR005727">
    <property type="entry name" value="Ribosomal_uL22_bac/chlpt-type"/>
</dbReference>
<dbReference type="InterPro" id="IPR047867">
    <property type="entry name" value="Ribosomal_uL22_bac/org-type"/>
</dbReference>
<dbReference type="InterPro" id="IPR018260">
    <property type="entry name" value="Ribosomal_uL22_CS"/>
</dbReference>
<dbReference type="InterPro" id="IPR036394">
    <property type="entry name" value="Ribosomal_uL22_sf"/>
</dbReference>
<dbReference type="NCBIfam" id="TIGR01044">
    <property type="entry name" value="rplV_bact"/>
    <property type="match status" value="1"/>
</dbReference>
<dbReference type="PANTHER" id="PTHR13501">
    <property type="entry name" value="CHLOROPLAST 50S RIBOSOMAL PROTEIN L22-RELATED"/>
    <property type="match status" value="1"/>
</dbReference>
<dbReference type="PANTHER" id="PTHR13501:SF8">
    <property type="entry name" value="LARGE RIBOSOMAL SUBUNIT PROTEIN UL22M"/>
    <property type="match status" value="1"/>
</dbReference>
<dbReference type="Pfam" id="PF00237">
    <property type="entry name" value="Ribosomal_L22"/>
    <property type="match status" value="1"/>
</dbReference>
<dbReference type="SUPFAM" id="SSF54843">
    <property type="entry name" value="Ribosomal protein L22"/>
    <property type="match status" value="1"/>
</dbReference>
<dbReference type="PROSITE" id="PS00464">
    <property type="entry name" value="RIBOSOMAL_L22"/>
    <property type="match status" value="1"/>
</dbReference>